<organism>
    <name type="scientific">Leptospira interrogans serogroup Icterohaemorrhagiae serovar Lai (strain 56601)</name>
    <dbReference type="NCBI Taxonomy" id="189518"/>
    <lineage>
        <taxon>Bacteria</taxon>
        <taxon>Pseudomonadati</taxon>
        <taxon>Spirochaetota</taxon>
        <taxon>Spirochaetia</taxon>
        <taxon>Leptospirales</taxon>
        <taxon>Leptospiraceae</taxon>
        <taxon>Leptospira</taxon>
    </lineage>
</organism>
<keyword id="KW-0413">Isomerase</keyword>
<keyword id="KW-1185">Reference proteome</keyword>
<keyword id="KW-0819">tRNA processing</keyword>
<name>TRUD_LEPIN</name>
<comment type="function">
    <text evidence="1">Responsible for synthesis of pseudouridine from uracil-13 in transfer RNAs.</text>
</comment>
<comment type="catalytic activity">
    <reaction evidence="1">
        <text>uridine(13) in tRNA = pseudouridine(13) in tRNA</text>
        <dbReference type="Rhea" id="RHEA:42540"/>
        <dbReference type="Rhea" id="RHEA-COMP:10105"/>
        <dbReference type="Rhea" id="RHEA-COMP:10106"/>
        <dbReference type="ChEBI" id="CHEBI:65314"/>
        <dbReference type="ChEBI" id="CHEBI:65315"/>
        <dbReference type="EC" id="5.4.99.27"/>
    </reaction>
</comment>
<comment type="similarity">
    <text evidence="1">Belongs to the pseudouridine synthase TruD family.</text>
</comment>
<proteinExistence type="inferred from homology"/>
<sequence>MELVQPFSGFLVYDLKQTPEDFQVEEILPSDLIQKTGKWMIFRLQKSGWNTLDALLRISKESKVSIFEIGYAGKKDRHASTSQYISCQKPLRVPKELTKVIQLDKIGFSKKSLSTELNVGNRFQLVLRNLLEKEIESIRNNFEKITKNGFINYYDSQRFSRFHSEFRLPILPFFKGDAETCLKLILTDPFPGEKKQARDRKKILYDLWGNWSQCEKWSKSKLEKNIFSNLKKEKKPTQKTYSDLILRFPEEELLMLVSSFQSLIWNEFVSEIFISDNFTGVWIKTKTGPLFFPGESSIQSVPFSKNLPVPGNPGIYKLEYSKKEIDTLKKILNQNGLTESVLDSSPFPIIKMNSFERKVRILPNDFQIGDFEEDDQHPGKRKVKISFRLPSGVYATMLIKRLMLRSRI</sequence>
<feature type="chain" id="PRO_0000152509" description="tRNA pseudouridine synthase D">
    <location>
        <begin position="1"/>
        <end position="408"/>
    </location>
</feature>
<feature type="domain" description="TRUD" evidence="1">
    <location>
        <begin position="149"/>
        <end position="362"/>
    </location>
</feature>
<feature type="active site" description="Nucleophile" evidence="1">
    <location>
        <position position="76"/>
    </location>
</feature>
<accession>Q8F8N2</accession>
<protein>
    <recommendedName>
        <fullName evidence="1">tRNA pseudouridine synthase D</fullName>
        <ecNumber evidence="1">5.4.99.27</ecNumber>
    </recommendedName>
    <alternativeName>
        <fullName evidence="1">tRNA pseudouridine(13) synthase</fullName>
    </alternativeName>
    <alternativeName>
        <fullName evidence="1">tRNA pseudouridylate synthase D</fullName>
    </alternativeName>
    <alternativeName>
        <fullName evidence="1">tRNA-uridine isomerase D</fullName>
    </alternativeName>
</protein>
<gene>
    <name evidence="1" type="primary">truD</name>
    <name type="ordered locus">LA_0523</name>
</gene>
<reference key="1">
    <citation type="journal article" date="2003" name="Nature">
        <title>Unique physiological and pathogenic features of Leptospira interrogans revealed by whole-genome sequencing.</title>
        <authorList>
            <person name="Ren S.-X."/>
            <person name="Fu G."/>
            <person name="Jiang X.-G."/>
            <person name="Zeng R."/>
            <person name="Miao Y.-G."/>
            <person name="Xu H."/>
            <person name="Zhang Y.-X."/>
            <person name="Xiong H."/>
            <person name="Lu G."/>
            <person name="Lu L.-F."/>
            <person name="Jiang H.-Q."/>
            <person name="Jia J."/>
            <person name="Tu Y.-F."/>
            <person name="Jiang J.-X."/>
            <person name="Gu W.-Y."/>
            <person name="Zhang Y.-Q."/>
            <person name="Cai Z."/>
            <person name="Sheng H.-H."/>
            <person name="Yin H.-F."/>
            <person name="Zhang Y."/>
            <person name="Zhu G.-F."/>
            <person name="Wan M."/>
            <person name="Huang H.-L."/>
            <person name="Qian Z."/>
            <person name="Wang S.-Y."/>
            <person name="Ma W."/>
            <person name="Yao Z.-J."/>
            <person name="Shen Y."/>
            <person name="Qiang B.-Q."/>
            <person name="Xia Q.-C."/>
            <person name="Guo X.-K."/>
            <person name="Danchin A."/>
            <person name="Saint Girons I."/>
            <person name="Somerville R.L."/>
            <person name="Wen Y.-M."/>
            <person name="Shi M.-H."/>
            <person name="Chen Z."/>
            <person name="Xu J.-G."/>
            <person name="Zhao G.-P."/>
        </authorList>
    </citation>
    <scope>NUCLEOTIDE SEQUENCE [LARGE SCALE GENOMIC DNA]</scope>
    <source>
        <strain>56601</strain>
    </source>
</reference>
<dbReference type="EC" id="5.4.99.27" evidence="1"/>
<dbReference type="EMBL" id="AE010300">
    <property type="protein sequence ID" value="AAN47722.1"/>
    <property type="molecule type" value="Genomic_DNA"/>
</dbReference>
<dbReference type="RefSeq" id="NP_710704.1">
    <property type="nucleotide sequence ID" value="NC_004342.2"/>
</dbReference>
<dbReference type="RefSeq" id="WP_000424589.1">
    <property type="nucleotide sequence ID" value="NC_004342.2"/>
</dbReference>
<dbReference type="SMR" id="Q8F8N2"/>
<dbReference type="STRING" id="189518.LA_0523"/>
<dbReference type="PaxDb" id="189518-LA_0523"/>
<dbReference type="EnsemblBacteria" id="AAN47722">
    <property type="protein sequence ID" value="AAN47722"/>
    <property type="gene ID" value="LA_0523"/>
</dbReference>
<dbReference type="GeneID" id="61142916"/>
<dbReference type="KEGG" id="lil:LA_0523"/>
<dbReference type="PATRIC" id="fig|189518.3.peg.528"/>
<dbReference type="HOGENOM" id="CLU_005281_4_1_12"/>
<dbReference type="InParanoid" id="Q8F8N2"/>
<dbReference type="OrthoDB" id="1550679at2"/>
<dbReference type="Proteomes" id="UP000001408">
    <property type="component" value="Chromosome I"/>
</dbReference>
<dbReference type="GO" id="GO:0009982">
    <property type="term" value="F:pseudouridine synthase activity"/>
    <property type="evidence" value="ECO:0000318"/>
    <property type="project" value="GO_Central"/>
</dbReference>
<dbReference type="GO" id="GO:0003723">
    <property type="term" value="F:RNA binding"/>
    <property type="evidence" value="ECO:0007669"/>
    <property type="project" value="InterPro"/>
</dbReference>
<dbReference type="GO" id="GO:0160150">
    <property type="term" value="F:tRNA pseudouridine(13) synthase activity"/>
    <property type="evidence" value="ECO:0007669"/>
    <property type="project" value="UniProtKB-EC"/>
</dbReference>
<dbReference type="GO" id="GO:0001522">
    <property type="term" value="P:pseudouridine synthesis"/>
    <property type="evidence" value="ECO:0000318"/>
    <property type="project" value="GO_Central"/>
</dbReference>
<dbReference type="GO" id="GO:0031119">
    <property type="term" value="P:tRNA pseudouridine synthesis"/>
    <property type="evidence" value="ECO:0007669"/>
    <property type="project" value="UniProtKB-UniRule"/>
</dbReference>
<dbReference type="CDD" id="cd02577">
    <property type="entry name" value="PSTD1"/>
    <property type="match status" value="1"/>
</dbReference>
<dbReference type="FunFam" id="3.30.2350.20:FF:000035">
    <property type="entry name" value="tRNA pseudouridine synthase D"/>
    <property type="match status" value="1"/>
</dbReference>
<dbReference type="Gene3D" id="3.30.2350.20">
    <property type="entry name" value="TruD, catalytic domain"/>
    <property type="match status" value="2"/>
</dbReference>
<dbReference type="HAMAP" id="MF_01082">
    <property type="entry name" value="TruD"/>
    <property type="match status" value="1"/>
</dbReference>
<dbReference type="InterPro" id="IPR020103">
    <property type="entry name" value="PsdUridine_synth_cat_dom_sf"/>
</dbReference>
<dbReference type="InterPro" id="IPR001656">
    <property type="entry name" value="PsdUridine_synth_TruD"/>
</dbReference>
<dbReference type="InterPro" id="IPR020119">
    <property type="entry name" value="PsdUridine_synth_TruD_CS"/>
</dbReference>
<dbReference type="InterPro" id="IPR011760">
    <property type="entry name" value="PsdUridine_synth_TruD_insert"/>
</dbReference>
<dbReference type="InterPro" id="IPR042214">
    <property type="entry name" value="TruD_catalytic"/>
</dbReference>
<dbReference type="PANTHER" id="PTHR13326:SF21">
    <property type="entry name" value="PSEUDOURIDYLATE SYNTHASE PUS7L"/>
    <property type="match status" value="1"/>
</dbReference>
<dbReference type="PANTHER" id="PTHR13326">
    <property type="entry name" value="TRNA PSEUDOURIDINE SYNTHASE D"/>
    <property type="match status" value="1"/>
</dbReference>
<dbReference type="Pfam" id="PF01142">
    <property type="entry name" value="TruD"/>
    <property type="match status" value="1"/>
</dbReference>
<dbReference type="PIRSF" id="PIRSF037016">
    <property type="entry name" value="Pseudouridin_synth_euk_prd"/>
    <property type="match status" value="1"/>
</dbReference>
<dbReference type="SUPFAM" id="SSF55120">
    <property type="entry name" value="Pseudouridine synthase"/>
    <property type="match status" value="1"/>
</dbReference>
<dbReference type="PROSITE" id="PS50984">
    <property type="entry name" value="TRUD"/>
    <property type="match status" value="1"/>
</dbReference>
<dbReference type="PROSITE" id="PS01268">
    <property type="entry name" value="UPF0024"/>
    <property type="match status" value="1"/>
</dbReference>
<evidence type="ECO:0000255" key="1">
    <source>
        <dbReference type="HAMAP-Rule" id="MF_01082"/>
    </source>
</evidence>